<protein>
    <recommendedName>
        <fullName evidence="1">Small ribosomal subunit protein uS17</fullName>
    </recommendedName>
    <alternativeName>
        <fullName evidence="2">30S ribosomal protein S17</fullName>
    </alternativeName>
</protein>
<dbReference type="EMBL" id="CP000087">
    <property type="protein sequence ID" value="ABE05134.1"/>
    <property type="molecule type" value="Genomic_DNA"/>
</dbReference>
<dbReference type="RefSeq" id="WP_011477712.1">
    <property type="nucleotide sequence ID" value="NC_007940.1"/>
</dbReference>
<dbReference type="SMR" id="Q1RHN0"/>
<dbReference type="KEGG" id="rbe:RBE_1053"/>
<dbReference type="eggNOG" id="COG0186">
    <property type="taxonomic scope" value="Bacteria"/>
</dbReference>
<dbReference type="HOGENOM" id="CLU_073626_1_1_5"/>
<dbReference type="OrthoDB" id="9811714at2"/>
<dbReference type="Proteomes" id="UP000001951">
    <property type="component" value="Chromosome"/>
</dbReference>
<dbReference type="GO" id="GO:0022627">
    <property type="term" value="C:cytosolic small ribosomal subunit"/>
    <property type="evidence" value="ECO:0007669"/>
    <property type="project" value="TreeGrafter"/>
</dbReference>
<dbReference type="GO" id="GO:0019843">
    <property type="term" value="F:rRNA binding"/>
    <property type="evidence" value="ECO:0007669"/>
    <property type="project" value="UniProtKB-UniRule"/>
</dbReference>
<dbReference type="GO" id="GO:0003735">
    <property type="term" value="F:structural constituent of ribosome"/>
    <property type="evidence" value="ECO:0007669"/>
    <property type="project" value="InterPro"/>
</dbReference>
<dbReference type="GO" id="GO:0006412">
    <property type="term" value="P:translation"/>
    <property type="evidence" value="ECO:0007669"/>
    <property type="project" value="UniProtKB-UniRule"/>
</dbReference>
<dbReference type="CDD" id="cd00364">
    <property type="entry name" value="Ribosomal_uS17"/>
    <property type="match status" value="1"/>
</dbReference>
<dbReference type="Gene3D" id="2.40.50.140">
    <property type="entry name" value="Nucleic acid-binding proteins"/>
    <property type="match status" value="1"/>
</dbReference>
<dbReference type="HAMAP" id="MF_01345_B">
    <property type="entry name" value="Ribosomal_uS17_B"/>
    <property type="match status" value="1"/>
</dbReference>
<dbReference type="InterPro" id="IPR012340">
    <property type="entry name" value="NA-bd_OB-fold"/>
</dbReference>
<dbReference type="InterPro" id="IPR000266">
    <property type="entry name" value="Ribosomal_uS17"/>
</dbReference>
<dbReference type="InterPro" id="IPR019984">
    <property type="entry name" value="Ribosomal_uS17_bact/chlr"/>
</dbReference>
<dbReference type="InterPro" id="IPR019979">
    <property type="entry name" value="Ribosomal_uS17_CS"/>
</dbReference>
<dbReference type="NCBIfam" id="NF004123">
    <property type="entry name" value="PRK05610.1"/>
    <property type="match status" value="1"/>
</dbReference>
<dbReference type="NCBIfam" id="TIGR03635">
    <property type="entry name" value="uS17_bact"/>
    <property type="match status" value="1"/>
</dbReference>
<dbReference type="PANTHER" id="PTHR10744">
    <property type="entry name" value="40S RIBOSOMAL PROTEIN S11 FAMILY MEMBER"/>
    <property type="match status" value="1"/>
</dbReference>
<dbReference type="PANTHER" id="PTHR10744:SF1">
    <property type="entry name" value="SMALL RIBOSOMAL SUBUNIT PROTEIN US17M"/>
    <property type="match status" value="1"/>
</dbReference>
<dbReference type="Pfam" id="PF00366">
    <property type="entry name" value="Ribosomal_S17"/>
    <property type="match status" value="1"/>
</dbReference>
<dbReference type="PRINTS" id="PR00973">
    <property type="entry name" value="RIBOSOMALS17"/>
</dbReference>
<dbReference type="SUPFAM" id="SSF50249">
    <property type="entry name" value="Nucleic acid-binding proteins"/>
    <property type="match status" value="1"/>
</dbReference>
<dbReference type="PROSITE" id="PS00056">
    <property type="entry name" value="RIBOSOMAL_S17"/>
    <property type="match status" value="1"/>
</dbReference>
<comment type="function">
    <text evidence="1">One of the primary rRNA binding proteins, it binds specifically to the 5'-end of 16S ribosomal RNA.</text>
</comment>
<comment type="subunit">
    <text evidence="1">Part of the 30S ribosomal subunit.</text>
</comment>
<comment type="similarity">
    <text evidence="1">Belongs to the universal ribosomal protein uS17 family.</text>
</comment>
<evidence type="ECO:0000255" key="1">
    <source>
        <dbReference type="HAMAP-Rule" id="MF_01345"/>
    </source>
</evidence>
<evidence type="ECO:0000305" key="2"/>
<name>RS17_RICBR</name>
<accession>Q1RHN0</accession>
<feature type="chain" id="PRO_0000255697" description="Small ribosomal subunit protein uS17">
    <location>
        <begin position="1"/>
        <end position="77"/>
    </location>
</feature>
<reference key="1">
    <citation type="journal article" date="2006" name="PLoS Genet.">
        <title>Genome sequence of Rickettsia bellii illuminates the role of amoebae in gene exchanges between intracellular pathogens.</title>
        <authorList>
            <person name="Ogata H."/>
            <person name="La Scola B."/>
            <person name="Audic S."/>
            <person name="Renesto P."/>
            <person name="Blanc G."/>
            <person name="Robert C."/>
            <person name="Fournier P.-E."/>
            <person name="Claverie J.-M."/>
            <person name="Raoult D."/>
        </authorList>
    </citation>
    <scope>NUCLEOTIDE SEQUENCE [LARGE SCALE GENOMIC DNA]</scope>
    <source>
        <strain>RML369-C</strain>
    </source>
</reference>
<organism>
    <name type="scientific">Rickettsia bellii (strain RML369-C)</name>
    <dbReference type="NCBI Taxonomy" id="336407"/>
    <lineage>
        <taxon>Bacteria</taxon>
        <taxon>Pseudomonadati</taxon>
        <taxon>Pseudomonadota</taxon>
        <taxon>Alphaproteobacteria</taxon>
        <taxon>Rickettsiales</taxon>
        <taxon>Rickettsiaceae</taxon>
        <taxon>Rickettsieae</taxon>
        <taxon>Rickettsia</taxon>
        <taxon>belli group</taxon>
    </lineage>
</organism>
<sequence>MPKRVLQGVVISSKTDKTVTVKVERRFKHPIYKKFIKVSKKYAAHDPNNKFQEGDKVNIIESRPISKTKTWVVINEE</sequence>
<keyword id="KW-0687">Ribonucleoprotein</keyword>
<keyword id="KW-0689">Ribosomal protein</keyword>
<keyword id="KW-0694">RNA-binding</keyword>
<keyword id="KW-0699">rRNA-binding</keyword>
<gene>
    <name evidence="1" type="primary">rpsQ</name>
    <name type="ordered locus">RBE_1053</name>
</gene>
<proteinExistence type="inferred from homology"/>